<feature type="initiator methionine" description="Removed">
    <location>
        <position position="1"/>
    </location>
</feature>
<feature type="chain" id="PRO_0000191714" description="Choline transporter-like protein 1">
    <location>
        <begin position="2"/>
        <end position="656"/>
    </location>
</feature>
<feature type="topological domain" description="Cytoplasmic" evidence="3">
    <location>
        <begin position="2"/>
        <end position="29"/>
    </location>
</feature>
<feature type="transmembrane region" description="Helical" evidence="3">
    <location>
        <begin position="30"/>
        <end position="50"/>
    </location>
</feature>
<feature type="topological domain" description="Extracellular" evidence="3">
    <location>
        <begin position="51"/>
        <end position="211"/>
    </location>
</feature>
<feature type="transmembrane region" description="Helical" evidence="3">
    <location>
        <begin position="212"/>
        <end position="232"/>
    </location>
</feature>
<feature type="topological domain" description="Cytoplasmic" evidence="3">
    <location>
        <begin position="233"/>
        <end position="237"/>
    </location>
</feature>
<feature type="transmembrane region" description="Helical" evidence="3">
    <location>
        <begin position="238"/>
        <end position="258"/>
    </location>
</feature>
<feature type="topological domain" description="Extracellular" evidence="3">
    <location>
        <begin position="259"/>
        <end position="287"/>
    </location>
</feature>
<feature type="transmembrane region" description="Helical" evidence="3">
    <location>
        <begin position="288"/>
        <end position="308"/>
    </location>
</feature>
<feature type="topological domain" description="Cytoplasmic" evidence="3">
    <location>
        <begin position="309"/>
        <end position="314"/>
    </location>
</feature>
<feature type="transmembrane region" description="Helical" evidence="3">
    <location>
        <begin position="315"/>
        <end position="335"/>
    </location>
</feature>
<feature type="topological domain" description="Extracellular" evidence="3">
    <location>
        <begin position="336"/>
        <end position="337"/>
    </location>
</feature>
<feature type="transmembrane region" description="Helical" evidence="3">
    <location>
        <begin position="338"/>
        <end position="358"/>
    </location>
</feature>
<feature type="topological domain" description="Cytoplasmic" evidence="3">
    <location>
        <begin position="359"/>
        <end position="379"/>
    </location>
</feature>
<feature type="transmembrane region" description="Helical" evidence="3">
    <location>
        <begin position="380"/>
        <end position="400"/>
    </location>
</feature>
<feature type="topological domain" description="Extracellular" evidence="3">
    <location>
        <begin position="401"/>
        <end position="441"/>
    </location>
</feature>
<feature type="transmembrane region" description="Helical" evidence="3">
    <location>
        <begin position="442"/>
        <end position="462"/>
    </location>
</feature>
<feature type="topological domain" description="Cytoplasmic" evidence="3">
    <location>
        <begin position="463"/>
        <end position="536"/>
    </location>
</feature>
<feature type="transmembrane region" description="Helical" evidence="3">
    <location>
        <begin position="537"/>
        <end position="557"/>
    </location>
</feature>
<feature type="topological domain" description="Extracellular" evidence="3">
    <location>
        <begin position="558"/>
        <end position="565"/>
    </location>
</feature>
<feature type="transmembrane region" description="Helical" evidence="3">
    <location>
        <begin position="566"/>
        <end position="586"/>
    </location>
</feature>
<feature type="topological domain" description="Cytoplasmic" evidence="3">
    <location>
        <begin position="587"/>
        <end position="656"/>
    </location>
</feature>
<feature type="region of interest" description="Disordered" evidence="4">
    <location>
        <begin position="635"/>
        <end position="656"/>
    </location>
</feature>
<feature type="modified residue" description="Phosphoserine" evidence="2">
    <location>
        <position position="651"/>
    </location>
</feature>
<feature type="lipid moiety-binding region" description="N-myristoyl glycine" evidence="1">
    <location>
        <position position="2"/>
    </location>
</feature>
<feature type="glycosylation site" description="N-linked (GlcNAc...) asparagine" evidence="13">
    <location>
        <position position="134"/>
    </location>
</feature>
<feature type="glycosylation site" description="N-linked (GlcNAc...) asparagine" evidence="13">
    <location>
        <position position="179"/>
    </location>
</feature>
<feature type="splice variant" id="VSP_015429" description="In isoform 2." evidence="11">
    <original>ASGA</original>
    <variation>LRKR</variation>
    <location>
        <begin position="650"/>
        <end position="653"/>
    </location>
</feature>
<feature type="splice variant" id="VSP_015430" description="In isoform 2." evidence="11">
    <location>
        <begin position="654"/>
        <end position="656"/>
    </location>
</feature>
<feature type="sequence conflict" description="In Ref. 1; CAB75555." evidence="12" ref="1">
    <original>R</original>
    <variation>S</variation>
    <location>
        <position position="267"/>
    </location>
</feature>
<feature type="sequence conflict" description="In Ref. 1; CAB75555." evidence="12" ref="1">
    <original>K</original>
    <variation>E</variation>
    <location>
        <position position="645"/>
    </location>
</feature>
<reference key="1">
    <citation type="journal article" date="2000" name="Proc. Natl. Acad. Sci. U.S.A.">
        <title>An electric lobe suppressor for a yeast choline transport mutation belongs to a new family of transporter-like proteins.</title>
        <authorList>
            <person name="O'Regan S."/>
            <person name="Traiffort E."/>
            <person name="Ruat M."/>
            <person name="Cha N."/>
            <person name="Compaore D."/>
            <person name="Meunier F.-M."/>
        </authorList>
    </citation>
    <scope>NUCLEOTIDE SEQUENCE [MRNA] (ISOFORM 2)</scope>
    <scope>TISSUE SPECIFICITY</scope>
    <source>
        <tissue>Brain</tissue>
    </source>
</reference>
<reference key="2">
    <citation type="journal article" date="2005" name="J. Neurochem.">
        <title>Molecular characterization of the family of choline transporter-like proteins and their splice variants.</title>
        <authorList>
            <person name="Traiffort E."/>
            <person name="Ruat M."/>
            <person name="O'Regan S."/>
            <person name="Meunier F.-M."/>
        </authorList>
    </citation>
    <scope>NUCLEOTIDE SEQUENCE [MRNA] (ISOFORM 1)</scope>
    <scope>FUNCTION</scope>
    <scope>TISSUE SPECIFICITY</scope>
    <source>
        <strain>Wistar</strain>
        <tissue>Brain</tissue>
    </source>
</reference>
<reference key="3">
    <citation type="submission" date="2007-09" db="UniProtKB">
        <authorList>
            <person name="Lubec G."/>
            <person name="Kang S.U."/>
            <person name="Lubec S."/>
        </authorList>
    </citation>
    <scope>PROTEIN SEQUENCE OF 2-14; 57-71; 75-88; 90-104; 108-118; 161-174; 186-211; 271-286; 421-433; 516-527; 620-629; 631-644 AND 646-656</scope>
    <scope>IDENTIFICATION BY MASS SPECTROMETRY</scope>
    <source>
        <strain>Sprague-Dawley</strain>
        <tissue>Brain</tissue>
    </source>
</reference>
<reference key="4">
    <citation type="journal article" date="2002" name="Brain Res. Mol. Brain Res.">
        <title>Changes in mRNA for choline transporter-like protein following facial nerve transection.</title>
        <authorList>
            <person name="Che Y.H."/>
            <person name="Yamashita T."/>
            <person name="Higuchi H."/>
            <person name="Tohyama M."/>
        </authorList>
    </citation>
    <scope>INDUCTION</scope>
</reference>
<reference key="5">
    <citation type="journal article" date="2005" name="J. Neurochem.">
        <title>Molecular and functional characterization of an Na-independent choline transporter in rat astrocytes.</title>
        <authorList>
            <person name="Inazu M."/>
            <person name="Takeda H."/>
            <person name="Matsumiya T."/>
        </authorList>
    </citation>
    <scope>FUNCTION</scope>
    <scope>TISSUE SPECIFICITY</scope>
</reference>
<reference key="6">
    <citation type="journal article" date="2005" name="Mol. Cell. Neurosci.">
        <title>Differential expression and regulation of the high-affinity choline transporter CHT1 and choline acetyltransferase in neurons of superior cervical ganglia.</title>
        <authorList>
            <person name="Lecomte M.-J."/>
            <person name="De Gois S."/>
            <person name="Guerci A."/>
            <person name="Ravassard P."/>
            <person name="Faucon Biguet N."/>
            <person name="Mallet J."/>
            <person name="Berrard S."/>
        </authorList>
    </citation>
    <scope>INDUCTION</scope>
</reference>
<reference key="7">
    <citation type="journal article" date="2009" name="Arch. Biochem. Biophys.">
        <title>Molecular and functional characterization of choline transporter in rat renal tubule epithelial NRK-52E cells.</title>
        <authorList>
            <person name="Yabuki M."/>
            <person name="Inazu M."/>
            <person name="Yamada T."/>
            <person name="Tajima H."/>
            <person name="Matsumiya T."/>
        </authorList>
    </citation>
    <scope>FUNCTION</scope>
    <scope>TRANSPORTER ACTIVITY</scope>
    <scope>SUBCELLULAR LOCATION</scope>
</reference>
<reference key="8">
    <citation type="journal article" date="2013" name="J. Proteome Res.">
        <title>Site-specific glycan-peptide analysis for determination of N-glycoproteome heterogeneity.</title>
        <authorList>
            <person name="Parker B.L."/>
            <person name="Thaysen-Andersen M."/>
            <person name="Solis N."/>
            <person name="Scott N.E."/>
            <person name="Larsen M.R."/>
            <person name="Graham M.E."/>
            <person name="Packer N.H."/>
            <person name="Cordwell S.J."/>
        </authorList>
    </citation>
    <scope>GLYCOSYLATION [LARGE SCALE ANALYSIS] AT ASN-134 AND ASN-179</scope>
    <scope>IDENTIFICATION BY MASS SPECTROMETRY [LARGE SCALE ANALYSIS]</scope>
    <source>
        <tissue>Brain</tissue>
    </source>
</reference>
<organism>
    <name type="scientific">Rattus norvegicus</name>
    <name type="common">Rat</name>
    <dbReference type="NCBI Taxonomy" id="10116"/>
    <lineage>
        <taxon>Eukaryota</taxon>
        <taxon>Metazoa</taxon>
        <taxon>Chordata</taxon>
        <taxon>Craniata</taxon>
        <taxon>Vertebrata</taxon>
        <taxon>Euteleostomi</taxon>
        <taxon>Mammalia</taxon>
        <taxon>Eutheria</taxon>
        <taxon>Euarchontoglires</taxon>
        <taxon>Glires</taxon>
        <taxon>Rodentia</taxon>
        <taxon>Myomorpha</taxon>
        <taxon>Muroidea</taxon>
        <taxon>Muridae</taxon>
        <taxon>Murinae</taxon>
        <taxon>Rattus</taxon>
    </lineage>
</organism>
<gene>
    <name type="primary">Slc44a1</name>
    <name type="synonym">Cd92</name>
    <name type="synonym">Cdw92</name>
    <name type="synonym">Ctl1</name>
</gene>
<sequence length="656" mass="73092">MGCCSSASAAQSSKREWKPLEDRSCTDIPWLLLFVLFCIGMGFICGFSVATGAAARLVSGYDSYGNICGQRNAKLEAIANSGLDHTHRKYVFFLDPCNLDLINRKIKSMALCVAACPRQELKTLSDVQKFAEINGSALCSYNIKPSEYTLTAKSSAFCPKLPVPASAPIPFFHRCAPVNISCYAKFAEALITFVSDNSVLHRLISGVMTSKEIILGLCLLSLVLSMILMVIIRYISRVLVWILTILVILGSLGGTGVLWWLYAKQRRSPKETVIPEQLQIAEDNLRALLIYAISATVFTVILFLIMLVMRKRVALTIALFHVAGKVFIHLPLLVFQPFWTFFALVLFWAYWIMTLLFLGTTGSAVQNEQGFVEYKISGPLQYMWWYHVVGLIWISEFILACQQMTVAGAVVTYYFTRDKRNLPFTPILASVNRLIRYHLGTVAKGSFIITLVKIPRMILMYIHSQLKGKENACARCMLKSCICCLWCLEKCLSYLNQNAYTATAINSTNFCTSAKDAFVILVENALRVAAINTVGDFMLFLGKVLIVCSTGLAGIMLLNYQQDYTVWVLPLIIVCLFAFLVAHCFLSIYEMVVDVLFLCFAIDTKYNDGSPGREFYMDKVLMEFVENSRKAMKEAGKGGAADARKLKPMASGASSA</sequence>
<evidence type="ECO:0000250" key="1"/>
<evidence type="ECO:0000250" key="2">
    <source>
        <dbReference type="UniProtKB" id="Q8WWI5"/>
    </source>
</evidence>
<evidence type="ECO:0000255" key="3"/>
<evidence type="ECO:0000256" key="4">
    <source>
        <dbReference type="SAM" id="MobiDB-lite"/>
    </source>
</evidence>
<evidence type="ECO:0000269" key="5">
    <source>
    </source>
</evidence>
<evidence type="ECO:0000269" key="6">
    <source>
    </source>
</evidence>
<evidence type="ECO:0000269" key="7">
    <source>
    </source>
</evidence>
<evidence type="ECO:0000269" key="8">
    <source>
    </source>
</evidence>
<evidence type="ECO:0000269" key="9">
    <source>
    </source>
</evidence>
<evidence type="ECO:0000269" key="10">
    <source>
    </source>
</evidence>
<evidence type="ECO:0000303" key="11">
    <source>
    </source>
</evidence>
<evidence type="ECO:0000305" key="12"/>
<evidence type="ECO:0007744" key="13">
    <source>
    </source>
</evidence>
<protein>
    <recommendedName>
        <fullName>Choline transporter-like protein 1</fullName>
    </recommendedName>
    <alternativeName>
        <fullName>Solute carrier family 44 member 1</fullName>
    </alternativeName>
    <cdAntigenName>CD92</cdAntigenName>
</protein>
<accession>Q8VII6</accession>
<accession>Q9JJZ7</accession>
<proteinExistence type="evidence at protein level"/>
<name>CTL1_RAT</name>
<keyword id="KW-0025">Alternative splicing</keyword>
<keyword id="KW-0050">Antiport</keyword>
<keyword id="KW-1003">Cell membrane</keyword>
<keyword id="KW-0903">Direct protein sequencing</keyword>
<keyword id="KW-0325">Glycoprotein</keyword>
<keyword id="KW-0449">Lipoprotein</keyword>
<keyword id="KW-0472">Membrane</keyword>
<keyword id="KW-0496">Mitochondrion</keyword>
<keyword id="KW-1000">Mitochondrion outer membrane</keyword>
<keyword id="KW-0519">Myristate</keyword>
<keyword id="KW-0597">Phosphoprotein</keyword>
<keyword id="KW-1185">Reference proteome</keyword>
<keyword id="KW-0812">Transmembrane</keyword>
<keyword id="KW-1133">Transmembrane helix</keyword>
<keyword id="KW-0813">Transport</keyword>
<comment type="function">
    <text evidence="2 10">Choline transporter, acts as a choline/H+ antiporter (PubMed:19236841). Also acts as a high-affinity ethanolamine/H+ antiporter, regulating the supply of extracellular ethanolamine (Etn) for the CDP-Etn pathway, redistribute intracellular Etn and balance the CDP-Cho and CDP-Etn arms of the Kennedy pathway (PubMed:19236841). Involved in membrane synthesis and myelin production (By similarity).</text>
</comment>
<comment type="catalytic activity">
    <reaction evidence="10">
        <text>choline(out) + n H(+)(in) = choline(in) + n H(+)(out)</text>
        <dbReference type="Rhea" id="RHEA:75463"/>
        <dbReference type="ChEBI" id="CHEBI:15354"/>
        <dbReference type="ChEBI" id="CHEBI:15378"/>
    </reaction>
</comment>
<comment type="catalytic activity">
    <reaction evidence="2">
        <text>ethanolamine(out) + n H(+)(in) = ethanolamine(in) + n H(+)(out)</text>
        <dbReference type="Rhea" id="RHEA:75467"/>
        <dbReference type="ChEBI" id="CHEBI:15378"/>
        <dbReference type="ChEBI" id="CHEBI:57603"/>
    </reaction>
</comment>
<comment type="subcellular location">
    <subcellularLocation>
        <location evidence="10">Cell membrane</location>
        <topology evidence="3">Multi-pass membrane protein</topology>
    </subcellularLocation>
    <subcellularLocation>
        <location evidence="10">Mitochondrion outer membrane</location>
        <topology evidence="3">Multi-pass membrane protein</topology>
    </subcellularLocation>
</comment>
<comment type="alternative products">
    <event type="alternative splicing"/>
    <isoform>
        <id>Q8VII6-1</id>
        <name>1</name>
        <name>CTL1a</name>
        <sequence type="displayed"/>
    </isoform>
    <isoform>
        <id>Q8VII6-2</id>
        <name>2</name>
        <name>CTL1b</name>
        <sequence type="described" ref="VSP_015429 VSP_015430"/>
    </isoform>
</comment>
<comment type="tissue specificity">
    <text evidence="5 8 9">Expressed in neurons, oligodendrocytes and astrocytes. Also expressed in the mucosal cell layer of the colon. In the developing brain, isoform 1 is expressed in both neurons and oligodendroglial cells, whereas isoform 2 is restricted to oligodendroglial cells.</text>
</comment>
<comment type="induction">
    <text evidence="6 7">By leukemia inhibitory factor or retinoic acid in vitro. In vivo, induced during the axonal elongation period following axotomy.</text>
</comment>
<comment type="similarity">
    <text evidence="12">Belongs to the CTL (choline transporter-like) family.</text>
</comment>
<dbReference type="EMBL" id="AJ245619">
    <property type="protein sequence ID" value="CAB75555.1"/>
    <property type="molecule type" value="mRNA"/>
</dbReference>
<dbReference type="EMBL" id="AJ420809">
    <property type="protein sequence ID" value="CAD12728.1"/>
    <property type="molecule type" value="mRNA"/>
</dbReference>
<dbReference type="RefSeq" id="NP_001029024.1">
    <property type="nucleotide sequence ID" value="NM_001033852.1"/>
</dbReference>
<dbReference type="RefSeq" id="NP_445944.2">
    <property type="nucleotide sequence ID" value="NM_053492.3"/>
</dbReference>
<dbReference type="SMR" id="Q8VII6"/>
<dbReference type="FunCoup" id="Q8VII6">
    <property type="interactions" value="1858"/>
</dbReference>
<dbReference type="STRING" id="10116.ENSRNOP00000071535"/>
<dbReference type="GlyCosmos" id="Q8VII6">
    <property type="glycosylation" value="2 sites, 6 glycans"/>
</dbReference>
<dbReference type="GlyGen" id="Q8VII6">
    <property type="glycosylation" value="2 sites, 6 N-linked glycans (2 sites)"/>
</dbReference>
<dbReference type="iPTMnet" id="Q8VII6"/>
<dbReference type="PhosphoSitePlus" id="Q8VII6"/>
<dbReference type="SwissPalm" id="Q8VII6"/>
<dbReference type="jPOST" id="Q8VII6"/>
<dbReference type="PaxDb" id="10116-ENSRNOP00000024229"/>
<dbReference type="GeneID" id="85254"/>
<dbReference type="KEGG" id="rno:85254"/>
<dbReference type="UCSC" id="RGD:621426">
    <molecule id="Q8VII6-1"/>
    <property type="organism name" value="rat"/>
</dbReference>
<dbReference type="AGR" id="RGD:621426"/>
<dbReference type="CTD" id="23446"/>
<dbReference type="RGD" id="621426">
    <property type="gene designation" value="Slc44a1"/>
</dbReference>
<dbReference type="eggNOG" id="KOG1362">
    <property type="taxonomic scope" value="Eukaryota"/>
</dbReference>
<dbReference type="InParanoid" id="Q8VII6"/>
<dbReference type="OrthoDB" id="6516384at2759"/>
<dbReference type="PhylomeDB" id="Q8VII6"/>
<dbReference type="Reactome" id="R-RNO-1483191">
    <property type="pathway name" value="Synthesis of PC"/>
</dbReference>
<dbReference type="Reactome" id="R-RNO-425366">
    <property type="pathway name" value="Transport of bile salts and organic acids, metal ions and amine compounds"/>
</dbReference>
<dbReference type="Reactome" id="R-RNO-6798163">
    <property type="pathway name" value="Choline catabolism"/>
</dbReference>
<dbReference type="PRO" id="PR:Q8VII6"/>
<dbReference type="Proteomes" id="UP000002494">
    <property type="component" value="Unplaced"/>
</dbReference>
<dbReference type="GO" id="GO:0005829">
    <property type="term" value="C:cytosol"/>
    <property type="evidence" value="ECO:0000266"/>
    <property type="project" value="RGD"/>
</dbReference>
<dbReference type="GO" id="GO:0005741">
    <property type="term" value="C:mitochondrial outer membrane"/>
    <property type="evidence" value="ECO:0000250"/>
    <property type="project" value="UniProtKB"/>
</dbReference>
<dbReference type="GO" id="GO:0005739">
    <property type="term" value="C:mitochondrion"/>
    <property type="evidence" value="ECO:0000266"/>
    <property type="project" value="RGD"/>
</dbReference>
<dbReference type="GO" id="GO:0005886">
    <property type="term" value="C:plasma membrane"/>
    <property type="evidence" value="ECO:0000250"/>
    <property type="project" value="UniProtKB"/>
</dbReference>
<dbReference type="GO" id="GO:0015297">
    <property type="term" value="F:antiporter activity"/>
    <property type="evidence" value="ECO:0007669"/>
    <property type="project" value="UniProtKB-KW"/>
</dbReference>
<dbReference type="GO" id="GO:0015220">
    <property type="term" value="F:choline transmembrane transporter activity"/>
    <property type="evidence" value="ECO:0000315"/>
    <property type="project" value="ARUK-UCL"/>
</dbReference>
<dbReference type="GO" id="GO:0034228">
    <property type="term" value="F:ethanolamine transmembrane transporter activity"/>
    <property type="evidence" value="ECO:0000250"/>
    <property type="project" value="UniProtKB"/>
</dbReference>
<dbReference type="GO" id="GO:0015871">
    <property type="term" value="P:choline transport"/>
    <property type="evidence" value="ECO:0000315"/>
    <property type="project" value="ARUK-UCL"/>
</dbReference>
<dbReference type="GO" id="GO:0034229">
    <property type="term" value="P:ethanolamine transport"/>
    <property type="evidence" value="ECO:0000250"/>
    <property type="project" value="UniProtKB"/>
</dbReference>
<dbReference type="GO" id="GO:0055085">
    <property type="term" value="P:transmembrane transport"/>
    <property type="evidence" value="ECO:0000315"/>
    <property type="project" value="ARUK-UCL"/>
</dbReference>
<dbReference type="InterPro" id="IPR007603">
    <property type="entry name" value="Choline_transptr-like"/>
</dbReference>
<dbReference type="PANTHER" id="PTHR12385">
    <property type="entry name" value="CHOLINE TRANSPORTER-LIKE (SLC FAMILY 44)"/>
    <property type="match status" value="1"/>
</dbReference>
<dbReference type="PANTHER" id="PTHR12385:SF56">
    <property type="entry name" value="CHOLINE TRANSPORTER-LIKE PROTEIN 1"/>
    <property type="match status" value="1"/>
</dbReference>
<dbReference type="Pfam" id="PF04515">
    <property type="entry name" value="Choline_transpo"/>
    <property type="match status" value="1"/>
</dbReference>